<dbReference type="EMBL" id="M22637">
    <property type="protein sequence ID" value="AAA88084.1"/>
    <property type="status" value="ALT_INIT"/>
    <property type="molecule type" value="mRNA"/>
</dbReference>
<dbReference type="EMBL" id="M22637">
    <property type="protein sequence ID" value="AAA88085.1"/>
    <property type="status" value="ALT_INIT"/>
    <property type="molecule type" value="mRNA"/>
</dbReference>
<dbReference type="EMBL" id="M22638">
    <property type="protein sequence ID" value="AAA92488.1"/>
    <property type="status" value="ALT_INIT"/>
    <property type="molecule type" value="Genomic_DNA"/>
</dbReference>
<dbReference type="EMBL" id="AC005546">
    <property type="protein sequence ID" value="AAC33149.1"/>
    <property type="molecule type" value="Genomic_DNA"/>
</dbReference>
<dbReference type="EMBL" id="AC007787">
    <property type="status" value="NOT_ANNOTATED_CDS"/>
    <property type="molecule type" value="Genomic_DNA"/>
</dbReference>
<dbReference type="EMBL" id="BC002796">
    <property type="protein sequence ID" value="AAH02796.2"/>
    <property type="molecule type" value="mRNA"/>
</dbReference>
<dbReference type="CCDS" id="CCDS12292.1"/>
<dbReference type="PIR" id="A30988">
    <property type="entry name" value="A30988"/>
</dbReference>
<dbReference type="RefSeq" id="NP_005574.2">
    <property type="nucleotide sequence ID" value="NM_005583.4"/>
</dbReference>
<dbReference type="SMR" id="P12980"/>
<dbReference type="BioGRID" id="110244">
    <property type="interactions" value="11"/>
</dbReference>
<dbReference type="DIP" id="DIP-40885N"/>
<dbReference type="FunCoup" id="P12980">
    <property type="interactions" value="851"/>
</dbReference>
<dbReference type="IntAct" id="P12980">
    <property type="interactions" value="2"/>
</dbReference>
<dbReference type="STRING" id="9606.ENSP00000264824"/>
<dbReference type="GlyGen" id="P12980">
    <property type="glycosylation" value="2 sites"/>
</dbReference>
<dbReference type="iPTMnet" id="P12980"/>
<dbReference type="PhosphoSitePlus" id="P12980"/>
<dbReference type="BioMuta" id="LYL1"/>
<dbReference type="DMDM" id="226694149"/>
<dbReference type="CPTAC" id="CPTAC-1208"/>
<dbReference type="CPTAC" id="CPTAC-1209"/>
<dbReference type="MassIVE" id="P12980"/>
<dbReference type="PaxDb" id="9606-ENSP00000264824"/>
<dbReference type="PeptideAtlas" id="P12980"/>
<dbReference type="ProteomicsDB" id="52889"/>
<dbReference type="Pumba" id="P12980"/>
<dbReference type="Antibodypedia" id="26353">
    <property type="antibodies" value="167 antibodies from 26 providers"/>
</dbReference>
<dbReference type="DNASU" id="4066"/>
<dbReference type="Ensembl" id="ENST00000264824.5">
    <property type="protein sequence ID" value="ENSP00000264824.3"/>
    <property type="gene ID" value="ENSG00000104903.5"/>
</dbReference>
<dbReference type="GeneID" id="4066"/>
<dbReference type="KEGG" id="hsa:4066"/>
<dbReference type="MANE-Select" id="ENST00000264824.5">
    <property type="protein sequence ID" value="ENSP00000264824.3"/>
    <property type="RefSeq nucleotide sequence ID" value="NM_005583.5"/>
    <property type="RefSeq protein sequence ID" value="NP_005574.2"/>
</dbReference>
<dbReference type="UCSC" id="uc002mwi.4">
    <property type="organism name" value="human"/>
</dbReference>
<dbReference type="AGR" id="HGNC:6734"/>
<dbReference type="CTD" id="4066"/>
<dbReference type="DisGeNET" id="4066"/>
<dbReference type="GeneCards" id="LYL1"/>
<dbReference type="HGNC" id="HGNC:6734">
    <property type="gene designation" value="LYL1"/>
</dbReference>
<dbReference type="HPA" id="ENSG00000104903">
    <property type="expression patterns" value="Tissue enhanced (bone marrow, lymphoid tissue)"/>
</dbReference>
<dbReference type="MalaCards" id="LYL1"/>
<dbReference type="MIM" id="151440">
    <property type="type" value="gene+phenotype"/>
</dbReference>
<dbReference type="neXtProt" id="NX_P12980"/>
<dbReference type="OpenTargets" id="ENSG00000104903"/>
<dbReference type="PharmGKB" id="PA30497"/>
<dbReference type="VEuPathDB" id="HostDB:ENSG00000104903"/>
<dbReference type="eggNOG" id="KOG4029">
    <property type="taxonomic scope" value="Eukaryota"/>
</dbReference>
<dbReference type="GeneTree" id="ENSGT00940000162404"/>
<dbReference type="HOGENOM" id="CLU_047980_1_0_1"/>
<dbReference type="InParanoid" id="P12980"/>
<dbReference type="OMA" id="HRVPDDG"/>
<dbReference type="OrthoDB" id="10069510at2759"/>
<dbReference type="PAN-GO" id="P12980">
    <property type="GO annotations" value="3 GO annotations based on evolutionary models"/>
</dbReference>
<dbReference type="PhylomeDB" id="P12980"/>
<dbReference type="TreeFam" id="TF315153"/>
<dbReference type="PathwayCommons" id="P12980"/>
<dbReference type="Reactome" id="R-HSA-9031628">
    <property type="pathway name" value="NGF-stimulated transcription"/>
</dbReference>
<dbReference type="SignaLink" id="P12980"/>
<dbReference type="SIGNOR" id="P12980"/>
<dbReference type="BioGRID-ORCS" id="4066">
    <property type="hits" value="35 hits in 1178 CRISPR screens"/>
</dbReference>
<dbReference type="ChiTaRS" id="LYL1">
    <property type="organism name" value="human"/>
</dbReference>
<dbReference type="GeneWiki" id="LYL1"/>
<dbReference type="GenomeRNAi" id="4066"/>
<dbReference type="Pharos" id="P12980">
    <property type="development level" value="Tbio"/>
</dbReference>
<dbReference type="PRO" id="PR:P12980"/>
<dbReference type="Proteomes" id="UP000005640">
    <property type="component" value="Chromosome 19"/>
</dbReference>
<dbReference type="RNAct" id="P12980">
    <property type="molecule type" value="protein"/>
</dbReference>
<dbReference type="Bgee" id="ENSG00000104903">
    <property type="expression patterns" value="Expressed in blood and 150 other cell types or tissues"/>
</dbReference>
<dbReference type="ExpressionAtlas" id="P12980">
    <property type="expression patterns" value="baseline and differential"/>
</dbReference>
<dbReference type="GO" id="GO:0000785">
    <property type="term" value="C:chromatin"/>
    <property type="evidence" value="ECO:0000247"/>
    <property type="project" value="NTNU_SB"/>
</dbReference>
<dbReference type="GO" id="GO:0005654">
    <property type="term" value="C:nucleoplasm"/>
    <property type="evidence" value="ECO:0000304"/>
    <property type="project" value="Reactome"/>
</dbReference>
<dbReference type="GO" id="GO:0003677">
    <property type="term" value="F:DNA binding"/>
    <property type="evidence" value="ECO:0000314"/>
    <property type="project" value="UniProtKB"/>
</dbReference>
<dbReference type="GO" id="GO:0000981">
    <property type="term" value="F:DNA-binding transcription factor activity, RNA polymerase II-specific"/>
    <property type="evidence" value="ECO:0000247"/>
    <property type="project" value="NTNU_SB"/>
</dbReference>
<dbReference type="GO" id="GO:0046983">
    <property type="term" value="F:protein dimerization activity"/>
    <property type="evidence" value="ECO:0007669"/>
    <property type="project" value="InterPro"/>
</dbReference>
<dbReference type="GO" id="GO:0000978">
    <property type="term" value="F:RNA polymerase II cis-regulatory region sequence-specific DNA binding"/>
    <property type="evidence" value="ECO:0000318"/>
    <property type="project" value="GO_Central"/>
</dbReference>
<dbReference type="GO" id="GO:0030183">
    <property type="term" value="P:B cell differentiation"/>
    <property type="evidence" value="ECO:0000250"/>
    <property type="project" value="UniProtKB"/>
</dbReference>
<dbReference type="GO" id="GO:0001955">
    <property type="term" value="P:blood vessel maturation"/>
    <property type="evidence" value="ECO:0000315"/>
    <property type="project" value="UniProtKB"/>
</dbReference>
<dbReference type="GO" id="GO:0060216">
    <property type="term" value="P:definitive hemopoiesis"/>
    <property type="evidence" value="ECO:0000250"/>
    <property type="project" value="UniProtKB"/>
</dbReference>
<dbReference type="GO" id="GO:0045893">
    <property type="term" value="P:positive regulation of DNA-templated transcription"/>
    <property type="evidence" value="ECO:0000314"/>
    <property type="project" value="UniProtKB"/>
</dbReference>
<dbReference type="GO" id="GO:0006355">
    <property type="term" value="P:regulation of DNA-templated transcription"/>
    <property type="evidence" value="ECO:0000314"/>
    <property type="project" value="UniProtKB"/>
</dbReference>
<dbReference type="GO" id="GO:0006357">
    <property type="term" value="P:regulation of transcription by RNA polymerase II"/>
    <property type="evidence" value="ECO:0000318"/>
    <property type="project" value="GO_Central"/>
</dbReference>
<dbReference type="CDD" id="cd19705">
    <property type="entry name" value="bHLH_TS_LYL1"/>
    <property type="match status" value="1"/>
</dbReference>
<dbReference type="FunFam" id="4.10.280.10:FF:000015">
    <property type="entry name" value="T-cell acute lymphocytic leukemia 1"/>
    <property type="match status" value="1"/>
</dbReference>
<dbReference type="Gene3D" id="4.10.280.10">
    <property type="entry name" value="Helix-loop-helix DNA-binding domain"/>
    <property type="match status" value="1"/>
</dbReference>
<dbReference type="InterPro" id="IPR011598">
    <property type="entry name" value="bHLH_dom"/>
</dbReference>
<dbReference type="InterPro" id="IPR036638">
    <property type="entry name" value="HLH_DNA-bd_sf"/>
</dbReference>
<dbReference type="InterPro" id="IPR040238">
    <property type="entry name" value="TAL-like"/>
</dbReference>
<dbReference type="PANTHER" id="PTHR13864:SF6">
    <property type="entry name" value="PROTEIN LYL-1"/>
    <property type="match status" value="1"/>
</dbReference>
<dbReference type="PANTHER" id="PTHR13864">
    <property type="entry name" value="T-CELL ACUTE LYMPHOCYTIC LEUKEMIA/STEM CELL LEUKEMIA-RELATED"/>
    <property type="match status" value="1"/>
</dbReference>
<dbReference type="Pfam" id="PF00010">
    <property type="entry name" value="HLH"/>
    <property type="match status" value="1"/>
</dbReference>
<dbReference type="SMART" id="SM00353">
    <property type="entry name" value="HLH"/>
    <property type="match status" value="1"/>
</dbReference>
<dbReference type="SUPFAM" id="SSF47459">
    <property type="entry name" value="HLH, helix-loop-helix DNA-binding domain"/>
    <property type="match status" value="1"/>
</dbReference>
<dbReference type="PROSITE" id="PS50888">
    <property type="entry name" value="BHLH"/>
    <property type="match status" value="1"/>
</dbReference>
<reference key="1">
    <citation type="journal article" date="1989" name="Cell">
        <title>lyl-1, a novel gene altered by chromosomal translocation in T cell leukemia, codes for a protein with a helix-loop-helix DNA binding motif.</title>
        <authorList>
            <person name="Mellentin J.D."/>
            <person name="Smith S.D."/>
            <person name="Cleary M.L."/>
        </authorList>
    </citation>
    <scope>NUCLEOTIDE SEQUENCE [GENOMIC DNA / MRNA]</scope>
</reference>
<reference key="2">
    <citation type="journal article" date="2004" name="Nature">
        <title>The DNA sequence and biology of human chromosome 19.</title>
        <authorList>
            <person name="Grimwood J."/>
            <person name="Gordon L.A."/>
            <person name="Olsen A.S."/>
            <person name="Terry A."/>
            <person name="Schmutz J."/>
            <person name="Lamerdin J.E."/>
            <person name="Hellsten U."/>
            <person name="Goodstein D."/>
            <person name="Couronne O."/>
            <person name="Tran-Gyamfi M."/>
            <person name="Aerts A."/>
            <person name="Altherr M."/>
            <person name="Ashworth L."/>
            <person name="Bajorek E."/>
            <person name="Black S."/>
            <person name="Branscomb E."/>
            <person name="Caenepeel S."/>
            <person name="Carrano A.V."/>
            <person name="Caoile C."/>
            <person name="Chan Y.M."/>
            <person name="Christensen M."/>
            <person name="Cleland C.A."/>
            <person name="Copeland A."/>
            <person name="Dalin E."/>
            <person name="Dehal P."/>
            <person name="Denys M."/>
            <person name="Detter J.C."/>
            <person name="Escobar J."/>
            <person name="Flowers D."/>
            <person name="Fotopulos D."/>
            <person name="Garcia C."/>
            <person name="Georgescu A.M."/>
            <person name="Glavina T."/>
            <person name="Gomez M."/>
            <person name="Gonzales E."/>
            <person name="Groza M."/>
            <person name="Hammon N."/>
            <person name="Hawkins T."/>
            <person name="Haydu L."/>
            <person name="Ho I."/>
            <person name="Huang W."/>
            <person name="Israni S."/>
            <person name="Jett J."/>
            <person name="Kadner K."/>
            <person name="Kimball H."/>
            <person name="Kobayashi A."/>
            <person name="Larionov V."/>
            <person name="Leem S.-H."/>
            <person name="Lopez F."/>
            <person name="Lou Y."/>
            <person name="Lowry S."/>
            <person name="Malfatti S."/>
            <person name="Martinez D."/>
            <person name="McCready P.M."/>
            <person name="Medina C."/>
            <person name="Morgan J."/>
            <person name="Nelson K."/>
            <person name="Nolan M."/>
            <person name="Ovcharenko I."/>
            <person name="Pitluck S."/>
            <person name="Pollard M."/>
            <person name="Popkie A.P."/>
            <person name="Predki P."/>
            <person name="Quan G."/>
            <person name="Ramirez L."/>
            <person name="Rash S."/>
            <person name="Retterer J."/>
            <person name="Rodriguez A."/>
            <person name="Rogers S."/>
            <person name="Salamov A."/>
            <person name="Salazar A."/>
            <person name="She X."/>
            <person name="Smith D."/>
            <person name="Slezak T."/>
            <person name="Solovyev V."/>
            <person name="Thayer N."/>
            <person name="Tice H."/>
            <person name="Tsai M."/>
            <person name="Ustaszewska A."/>
            <person name="Vo N."/>
            <person name="Wagner M."/>
            <person name="Wheeler J."/>
            <person name="Wu K."/>
            <person name="Xie G."/>
            <person name="Yang J."/>
            <person name="Dubchak I."/>
            <person name="Furey T.S."/>
            <person name="DeJong P."/>
            <person name="Dickson M."/>
            <person name="Gordon D."/>
            <person name="Eichler E.E."/>
            <person name="Pennacchio L.A."/>
            <person name="Richardson P."/>
            <person name="Stubbs L."/>
            <person name="Rokhsar D.S."/>
            <person name="Myers R.M."/>
            <person name="Rubin E.M."/>
            <person name="Lucas S.M."/>
        </authorList>
    </citation>
    <scope>NUCLEOTIDE SEQUENCE [LARGE SCALE GENOMIC DNA]</scope>
</reference>
<reference key="3">
    <citation type="journal article" date="2004" name="Genome Res.">
        <title>The status, quality, and expansion of the NIH full-length cDNA project: the Mammalian Gene Collection (MGC).</title>
        <authorList>
            <consortium name="The MGC Project Team"/>
        </authorList>
    </citation>
    <scope>NUCLEOTIDE SEQUENCE [LARGE SCALE MRNA]</scope>
    <source>
        <tissue>Lymph</tissue>
    </source>
</reference>
<reference key="4">
    <citation type="journal article" date="2013" name="J. Proteome Res.">
        <title>Toward a comprehensive characterization of a human cancer cell phosphoproteome.</title>
        <authorList>
            <person name="Zhou H."/>
            <person name="Di Palma S."/>
            <person name="Preisinger C."/>
            <person name="Peng M."/>
            <person name="Polat A.N."/>
            <person name="Heck A.J."/>
            <person name="Mohammed S."/>
        </authorList>
    </citation>
    <scope>PHOSPHORYLATION [LARGE SCALE ANALYSIS] AT SER-260 AND SER-276</scope>
    <scope>IDENTIFICATION BY MASS SPECTROMETRY [LARGE SCALE ANALYSIS]</scope>
    <source>
        <tissue>Erythroleukemia</tissue>
    </source>
</reference>
<sequence>MCPPQAQAEVGPTMTEKAEMVCAPSPAPAPPPKPASPGPPQVEEVGHRGGSSPPRLPPGVPVISLGHSRPPGVAMPTTELGTLRPPLLQLSTLGTAPPTLALHYHPHPFLNSVYIGPAGPFSIFPSSRLKRRPSHCELDLAEGHQPQKVARRVFTNSRERWRQQNVNGAFAELRKLLPTHPPDRKLSKNEVLRLAMKYIGFLVRLLRDQAAALAAGPTPPGPRKRPVHRVPDDGARRGSGRRAEAAARSQPAPPADPDGSPGGAARPIKMEQTALSPEVR</sequence>
<organism>
    <name type="scientific">Homo sapiens</name>
    <name type="common">Human</name>
    <dbReference type="NCBI Taxonomy" id="9606"/>
    <lineage>
        <taxon>Eukaryota</taxon>
        <taxon>Metazoa</taxon>
        <taxon>Chordata</taxon>
        <taxon>Craniata</taxon>
        <taxon>Vertebrata</taxon>
        <taxon>Euteleostomi</taxon>
        <taxon>Mammalia</taxon>
        <taxon>Eutheria</taxon>
        <taxon>Euarchontoglires</taxon>
        <taxon>Primates</taxon>
        <taxon>Haplorrhini</taxon>
        <taxon>Catarrhini</taxon>
        <taxon>Hominidae</taxon>
        <taxon>Homo</taxon>
    </lineage>
</organism>
<protein>
    <recommendedName>
        <fullName>Protein lyl-1</fullName>
    </recommendedName>
    <alternativeName>
        <fullName>Class A basic helix-loop-helix protein 18</fullName>
        <shortName>bHLHa18</shortName>
    </alternativeName>
    <alternativeName>
        <fullName>Lymphoblastic leukemia-derived sequence 1</fullName>
    </alternativeName>
</protein>
<feature type="chain" id="PRO_0000127262" description="Protein lyl-1">
    <location>
        <begin position="1"/>
        <end position="280"/>
    </location>
</feature>
<feature type="domain" description="bHLH" evidence="1">
    <location>
        <begin position="150"/>
        <end position="202"/>
    </location>
</feature>
<feature type="region of interest" description="Disordered" evidence="2">
    <location>
        <begin position="1"/>
        <end position="60"/>
    </location>
</feature>
<feature type="region of interest" description="Disordered" evidence="2">
    <location>
        <begin position="214"/>
        <end position="280"/>
    </location>
</feature>
<feature type="compositionally biased region" description="Pro residues" evidence="2">
    <location>
        <begin position="25"/>
        <end position="40"/>
    </location>
</feature>
<feature type="compositionally biased region" description="Basic and acidic residues" evidence="2">
    <location>
        <begin position="229"/>
        <end position="245"/>
    </location>
</feature>
<feature type="compositionally biased region" description="Low complexity" evidence="2">
    <location>
        <begin position="257"/>
        <end position="267"/>
    </location>
</feature>
<feature type="modified residue" description="Phosphoserine" evidence="4">
    <location>
        <position position="260"/>
    </location>
</feature>
<feature type="modified residue" description="Phosphoserine" evidence="4">
    <location>
        <position position="276"/>
    </location>
</feature>
<feature type="sequence conflict" description="In Ref. 1; AAA88084/AAA88085/AAA92488." evidence="3" ref="1">
    <original>A</original>
    <variation>P</variation>
    <location>
        <position position="235"/>
    </location>
</feature>
<accession>P12980</accession>
<accession>O76102</accession>
<name>LYL1_HUMAN</name>
<evidence type="ECO:0000255" key="1">
    <source>
        <dbReference type="PROSITE-ProRule" id="PRU00981"/>
    </source>
</evidence>
<evidence type="ECO:0000256" key="2">
    <source>
        <dbReference type="SAM" id="MobiDB-lite"/>
    </source>
</evidence>
<evidence type="ECO:0000305" key="3"/>
<evidence type="ECO:0007744" key="4">
    <source>
    </source>
</evidence>
<comment type="subunit">
    <text>Efficient DNA binding requires dimerization with another bHLH protein.</text>
</comment>
<comment type="subcellular location">
    <subcellularLocation>
        <location evidence="1">Nucleus</location>
    </subcellularLocation>
</comment>
<comment type="disease">
    <text>A chromosomal aberration involving LYL1 may be a cause of a form of T-cell acute lymphoblastic leukemia (T-ALL). Translocation t(7;19)(q35;p13) with TCRB.</text>
</comment>
<comment type="sequence caution" evidence="3">
    <conflict type="erroneous initiation">
        <sequence resource="EMBL-CDS" id="AAA88084"/>
    </conflict>
</comment>
<comment type="sequence caution" evidence="3">
    <conflict type="erroneous initiation">
        <sequence resource="EMBL-CDS" id="AAA88085"/>
    </conflict>
</comment>
<comment type="sequence caution" evidence="3">
    <conflict type="erroneous initiation">
        <sequence resource="EMBL-CDS" id="AAA92488"/>
    </conflict>
</comment>
<comment type="online information" name="Atlas of Genetics and Cytogenetics in Oncology and Haematology">
    <link uri="https://atlasgeneticsoncology.org/gene/51/LYL1"/>
</comment>
<gene>
    <name type="primary">LYL1</name>
    <name type="synonym">BHLHA18</name>
</gene>
<proteinExistence type="evidence at protein level"/>
<keyword id="KW-0160">Chromosomal rearrangement</keyword>
<keyword id="KW-0238">DNA-binding</keyword>
<keyword id="KW-0539">Nucleus</keyword>
<keyword id="KW-0597">Phosphoprotein</keyword>
<keyword id="KW-1267">Proteomics identification</keyword>
<keyword id="KW-0656">Proto-oncogene</keyword>
<keyword id="KW-1185">Reference proteome</keyword>
<keyword id="KW-0804">Transcription</keyword>
<keyword id="KW-0805">Transcription regulation</keyword>